<name>KISHA_XENTR</name>
<gene>
    <name type="primary">tmem167a</name>
    <name type="synonym">tmem167</name>
    <name type="ORF">TNeu030j15.1</name>
</gene>
<protein>
    <recommendedName>
        <fullName>Protein kish-A</fullName>
    </recommendedName>
    <alternativeName>
        <fullName>Transmembrane protein 167</fullName>
    </alternativeName>
    <alternativeName>
        <fullName>Transmembrane protein 167A</fullName>
    </alternativeName>
</protein>
<sequence length="72" mass="8087">MSAIFNFQSLLIVILLLICTCAYLRALVPNLLDKNKTGILGIFWKCARIGERKSPYVAVCCVVMAFSILFMQ</sequence>
<dbReference type="EMBL" id="CR761906">
    <property type="protein sequence ID" value="CAJ82352.1"/>
    <property type="status" value="ALT_INIT"/>
    <property type="molecule type" value="mRNA"/>
</dbReference>
<dbReference type="EMBL" id="BC135460">
    <property type="protein sequence ID" value="AAI35461.1"/>
    <property type="molecule type" value="mRNA"/>
</dbReference>
<dbReference type="RefSeq" id="NP_001016167.1">
    <property type="nucleotide sequence ID" value="NM_001016167.2"/>
</dbReference>
<dbReference type="FunCoup" id="Q28FL7">
    <property type="interactions" value="1226"/>
</dbReference>
<dbReference type="STRING" id="8364.ENSXETP00000011296"/>
<dbReference type="GlyCosmos" id="Q28FL7">
    <property type="glycosylation" value="1 site, No reported glycans"/>
</dbReference>
<dbReference type="PaxDb" id="8364-ENSXETP00000057858"/>
<dbReference type="DNASU" id="548921"/>
<dbReference type="GeneID" id="548921"/>
<dbReference type="KEGG" id="xtr:548921"/>
<dbReference type="AGR" id="Xenbase:XB-GENE-943966"/>
<dbReference type="CTD" id="153339"/>
<dbReference type="Xenbase" id="XB-GENE-943966">
    <property type="gene designation" value="tmem167a"/>
</dbReference>
<dbReference type="eggNOG" id="KOG3808">
    <property type="taxonomic scope" value="Eukaryota"/>
</dbReference>
<dbReference type="HOGENOM" id="CLU_152663_1_1_1"/>
<dbReference type="InParanoid" id="Q28FL7"/>
<dbReference type="OMA" id="KVGFQGT"/>
<dbReference type="OrthoDB" id="10034655at2759"/>
<dbReference type="PhylomeDB" id="Q28FL7"/>
<dbReference type="TreeFam" id="TF300138"/>
<dbReference type="Proteomes" id="UP000008143">
    <property type="component" value="Chromosome 1"/>
</dbReference>
<dbReference type="Bgee" id="ENSXETG00000027813">
    <property type="expression patterns" value="Expressed in embryo and 16 other cell types or tissues"/>
</dbReference>
<dbReference type="ExpressionAtlas" id="Q28FL7">
    <property type="expression patterns" value="baseline"/>
</dbReference>
<dbReference type="GO" id="GO:0000139">
    <property type="term" value="C:Golgi membrane"/>
    <property type="evidence" value="ECO:0007669"/>
    <property type="project" value="UniProtKB-SubCell"/>
</dbReference>
<dbReference type="InterPro" id="IPR051523">
    <property type="entry name" value="KISH_domain"/>
</dbReference>
<dbReference type="InterPro" id="IPR009653">
    <property type="entry name" value="Ksh1"/>
</dbReference>
<dbReference type="PANTHER" id="PTHR13229">
    <property type="entry name" value="PROTEIN KISH-A"/>
    <property type="match status" value="1"/>
</dbReference>
<dbReference type="Pfam" id="PF06842">
    <property type="entry name" value="DUF1242"/>
    <property type="match status" value="1"/>
</dbReference>
<keyword id="KW-0325">Glycoprotein</keyword>
<keyword id="KW-0333">Golgi apparatus</keyword>
<keyword id="KW-0472">Membrane</keyword>
<keyword id="KW-1185">Reference proteome</keyword>
<keyword id="KW-0732">Signal</keyword>
<keyword id="KW-0812">Transmembrane</keyword>
<keyword id="KW-1133">Transmembrane helix</keyword>
<reference key="1">
    <citation type="submission" date="2006-03" db="EMBL/GenBank/DDBJ databases">
        <authorList>
            <consortium name="Sanger Xenopus tropicalis EST/cDNA project"/>
        </authorList>
    </citation>
    <scope>NUCLEOTIDE SEQUENCE [LARGE SCALE MRNA]</scope>
    <source>
        <tissue>Neurula</tissue>
    </source>
</reference>
<reference key="2">
    <citation type="submission" date="2007-03" db="EMBL/GenBank/DDBJ databases">
        <authorList>
            <consortium name="NIH - Xenopus Gene Collection (XGC) project"/>
        </authorList>
    </citation>
    <scope>NUCLEOTIDE SEQUENCE [LARGE SCALE MRNA]</scope>
    <source>
        <tissue>Embryo</tissue>
    </source>
</reference>
<comment type="function">
    <text evidence="1">Involved in the early part of the secretory pathway.</text>
</comment>
<comment type="subcellular location">
    <subcellularLocation>
        <location evidence="1">Golgi apparatus membrane</location>
        <topology evidence="1">Single-pass type I membrane protein</topology>
    </subcellularLocation>
</comment>
<comment type="similarity">
    <text evidence="3">Belongs to the KISH family.</text>
</comment>
<comment type="sequence caution" evidence="3">
    <conflict type="erroneous initiation">
        <sequence resource="EMBL-CDS" id="CAJ82352"/>
    </conflict>
</comment>
<feature type="signal peptide" evidence="2">
    <location>
        <begin position="1"/>
        <end position="26"/>
    </location>
</feature>
<feature type="chain" id="PRO_0000247773" description="Protein kish-A">
    <location>
        <begin position="27"/>
        <end position="72"/>
    </location>
</feature>
<feature type="topological domain" description="Extracellular" evidence="2">
    <location>
        <begin position="27"/>
        <end position="53"/>
    </location>
</feature>
<feature type="transmembrane region" description="Helical" evidence="2">
    <location>
        <begin position="54"/>
        <end position="71"/>
    </location>
</feature>
<feature type="topological domain" description="Cytoplasmic" evidence="2">
    <location>
        <position position="72"/>
    </location>
</feature>
<feature type="glycosylation site" description="N-linked (GlcNAc...) asparagine" evidence="2">
    <location>
        <position position="35"/>
    </location>
</feature>
<evidence type="ECO:0000250" key="1"/>
<evidence type="ECO:0000255" key="2"/>
<evidence type="ECO:0000305" key="3"/>
<proteinExistence type="inferred from homology"/>
<organism>
    <name type="scientific">Xenopus tropicalis</name>
    <name type="common">Western clawed frog</name>
    <name type="synonym">Silurana tropicalis</name>
    <dbReference type="NCBI Taxonomy" id="8364"/>
    <lineage>
        <taxon>Eukaryota</taxon>
        <taxon>Metazoa</taxon>
        <taxon>Chordata</taxon>
        <taxon>Craniata</taxon>
        <taxon>Vertebrata</taxon>
        <taxon>Euteleostomi</taxon>
        <taxon>Amphibia</taxon>
        <taxon>Batrachia</taxon>
        <taxon>Anura</taxon>
        <taxon>Pipoidea</taxon>
        <taxon>Pipidae</taxon>
        <taxon>Xenopodinae</taxon>
        <taxon>Xenopus</taxon>
        <taxon>Silurana</taxon>
    </lineage>
</organism>
<accession>Q28FL7</accession>
<accession>A4QND4</accession>